<reference key="1">
    <citation type="journal article" date="2004" name="J. Mol. Microbiol. Biotechnol.">
        <title>The complete genome sequence of Bacillus licheniformis DSM13, an organism with great industrial potential.</title>
        <authorList>
            <person name="Veith B."/>
            <person name="Herzberg C."/>
            <person name="Steckel S."/>
            <person name="Feesche J."/>
            <person name="Maurer K.H."/>
            <person name="Ehrenreich P."/>
            <person name="Baeumer S."/>
            <person name="Henne A."/>
            <person name="Liesegang H."/>
            <person name="Merkl R."/>
            <person name="Ehrenreich A."/>
            <person name="Gottschalk G."/>
        </authorList>
    </citation>
    <scope>NUCLEOTIDE SEQUENCE [LARGE SCALE GENOMIC DNA]</scope>
    <source>
        <strain>ATCC 14580 / DSM 13 / JCM 2505 / CCUG 7422 / NBRC 12200 / NCIMB 9375 / NCTC 10341 / NRRL NRS-1264 / Gibson 46</strain>
    </source>
</reference>
<reference key="2">
    <citation type="journal article" date="2004" name="Genome Biol.">
        <title>Complete genome sequence of the industrial bacterium Bacillus licheniformis and comparisons with closely related Bacillus species.</title>
        <authorList>
            <person name="Rey M.W."/>
            <person name="Ramaiya P."/>
            <person name="Nelson B.A."/>
            <person name="Brody-Karpin S.D."/>
            <person name="Zaretsky E.J."/>
            <person name="Tang M."/>
            <person name="Lopez de Leon A."/>
            <person name="Xiang H."/>
            <person name="Gusti V."/>
            <person name="Clausen I.G."/>
            <person name="Olsen P.B."/>
            <person name="Rasmussen M.D."/>
            <person name="Andersen J.T."/>
            <person name="Joergensen P.L."/>
            <person name="Larsen T.S."/>
            <person name="Sorokin A."/>
            <person name="Bolotin A."/>
            <person name="Lapidus A."/>
            <person name="Galleron N."/>
            <person name="Ehrlich S.D."/>
            <person name="Berka R.M."/>
        </authorList>
    </citation>
    <scope>NUCLEOTIDE SEQUENCE [LARGE SCALE GENOMIC DNA]</scope>
    <source>
        <strain>ATCC 14580 / DSM 13 / JCM 2505 / CCUG 7422 / NBRC 12200 / NCIMB 9375 / NCTC 10341 / NRRL NRS-1264 / Gibson 46</strain>
    </source>
</reference>
<keyword id="KW-0012">Acyltransferase</keyword>
<keyword id="KW-0133">Cell shape</keyword>
<keyword id="KW-0961">Cell wall biogenesis/degradation</keyword>
<keyword id="KW-0963">Cytoplasm</keyword>
<keyword id="KW-0460">Magnesium</keyword>
<keyword id="KW-0479">Metal-binding</keyword>
<keyword id="KW-0511">Multifunctional enzyme</keyword>
<keyword id="KW-0548">Nucleotidyltransferase</keyword>
<keyword id="KW-0573">Peptidoglycan synthesis</keyword>
<keyword id="KW-1185">Reference proteome</keyword>
<keyword id="KW-0677">Repeat</keyword>
<keyword id="KW-0808">Transferase</keyword>
<accession>Q65PH1</accession>
<accession>Q62ZW0</accession>
<comment type="function">
    <text evidence="1">Catalyzes the last two sequential reactions in the de novo biosynthetic pathway for UDP-N-acetylglucosamine (UDP-GlcNAc). The C-terminal domain catalyzes the transfer of acetyl group from acetyl coenzyme A to glucosamine-1-phosphate (GlcN-1-P) to produce N-acetylglucosamine-1-phosphate (GlcNAc-1-P), which is converted into UDP-GlcNAc by the transfer of uridine 5-monophosphate (from uridine 5-triphosphate), a reaction catalyzed by the N-terminal domain.</text>
</comment>
<comment type="catalytic activity">
    <reaction evidence="1">
        <text>alpha-D-glucosamine 1-phosphate + acetyl-CoA = N-acetyl-alpha-D-glucosamine 1-phosphate + CoA + H(+)</text>
        <dbReference type="Rhea" id="RHEA:13725"/>
        <dbReference type="ChEBI" id="CHEBI:15378"/>
        <dbReference type="ChEBI" id="CHEBI:57287"/>
        <dbReference type="ChEBI" id="CHEBI:57288"/>
        <dbReference type="ChEBI" id="CHEBI:57776"/>
        <dbReference type="ChEBI" id="CHEBI:58516"/>
        <dbReference type="EC" id="2.3.1.157"/>
    </reaction>
</comment>
<comment type="catalytic activity">
    <reaction evidence="1">
        <text>N-acetyl-alpha-D-glucosamine 1-phosphate + UTP + H(+) = UDP-N-acetyl-alpha-D-glucosamine + diphosphate</text>
        <dbReference type="Rhea" id="RHEA:13509"/>
        <dbReference type="ChEBI" id="CHEBI:15378"/>
        <dbReference type="ChEBI" id="CHEBI:33019"/>
        <dbReference type="ChEBI" id="CHEBI:46398"/>
        <dbReference type="ChEBI" id="CHEBI:57705"/>
        <dbReference type="ChEBI" id="CHEBI:57776"/>
        <dbReference type="EC" id="2.7.7.23"/>
    </reaction>
</comment>
<comment type="cofactor">
    <cofactor evidence="1">
        <name>Mg(2+)</name>
        <dbReference type="ChEBI" id="CHEBI:18420"/>
    </cofactor>
    <text evidence="1">Binds 1 Mg(2+) ion per subunit.</text>
</comment>
<comment type="pathway">
    <text evidence="1">Nucleotide-sugar biosynthesis; UDP-N-acetyl-alpha-D-glucosamine biosynthesis; N-acetyl-alpha-D-glucosamine 1-phosphate from alpha-D-glucosamine 6-phosphate (route II): step 2/2.</text>
</comment>
<comment type="pathway">
    <text evidence="1">Nucleotide-sugar biosynthesis; UDP-N-acetyl-alpha-D-glucosamine biosynthesis; UDP-N-acetyl-alpha-D-glucosamine from N-acetyl-alpha-D-glucosamine 1-phosphate: step 1/1.</text>
</comment>
<comment type="pathway">
    <text evidence="1">Bacterial outer membrane biogenesis; LPS lipid A biosynthesis.</text>
</comment>
<comment type="subunit">
    <text evidence="1">Homotrimer.</text>
</comment>
<comment type="subcellular location">
    <subcellularLocation>
        <location evidence="1">Cytoplasm</location>
    </subcellularLocation>
</comment>
<comment type="similarity">
    <text evidence="1">In the N-terminal section; belongs to the N-acetylglucosamine-1-phosphate uridyltransferase family.</text>
</comment>
<comment type="similarity">
    <text evidence="1">In the C-terminal section; belongs to the transferase hexapeptide repeat family.</text>
</comment>
<comment type="sequence caution" evidence="2">
    <conflict type="erroneous initiation">
        <sequence resource="EMBL-CDS" id="AAU39043"/>
    </conflict>
    <text>Extended N-terminus.</text>
</comment>
<dbReference type="EC" id="2.7.7.23" evidence="1"/>
<dbReference type="EC" id="2.3.1.157" evidence="1"/>
<dbReference type="EMBL" id="AE017333">
    <property type="protein sequence ID" value="AAU39043.1"/>
    <property type="status" value="ALT_INIT"/>
    <property type="molecule type" value="Genomic_DNA"/>
</dbReference>
<dbReference type="EMBL" id="CP000002">
    <property type="protein sequence ID" value="AAU21698.1"/>
    <property type="molecule type" value="Genomic_DNA"/>
</dbReference>
<dbReference type="RefSeq" id="WP_011197467.1">
    <property type="nucleotide sequence ID" value="NC_006322.1"/>
</dbReference>
<dbReference type="SMR" id="Q65PH1"/>
<dbReference type="STRING" id="279010.BL00520"/>
<dbReference type="GeneID" id="92858985"/>
<dbReference type="KEGG" id="bld:BLi00063"/>
<dbReference type="KEGG" id="bli:BL00520"/>
<dbReference type="PATRIC" id="fig|279010.13.peg.56"/>
<dbReference type="eggNOG" id="COG1207">
    <property type="taxonomic scope" value="Bacteria"/>
</dbReference>
<dbReference type="HOGENOM" id="CLU_029499_15_2_9"/>
<dbReference type="UniPathway" id="UPA00113">
    <property type="reaction ID" value="UER00532"/>
</dbReference>
<dbReference type="UniPathway" id="UPA00113">
    <property type="reaction ID" value="UER00533"/>
</dbReference>
<dbReference type="UniPathway" id="UPA00973"/>
<dbReference type="Proteomes" id="UP000000606">
    <property type="component" value="Chromosome"/>
</dbReference>
<dbReference type="GO" id="GO:0005737">
    <property type="term" value="C:cytoplasm"/>
    <property type="evidence" value="ECO:0007669"/>
    <property type="project" value="UniProtKB-SubCell"/>
</dbReference>
<dbReference type="GO" id="GO:0016020">
    <property type="term" value="C:membrane"/>
    <property type="evidence" value="ECO:0007669"/>
    <property type="project" value="GOC"/>
</dbReference>
<dbReference type="GO" id="GO:0019134">
    <property type="term" value="F:glucosamine-1-phosphate N-acetyltransferase activity"/>
    <property type="evidence" value="ECO:0007669"/>
    <property type="project" value="UniProtKB-UniRule"/>
</dbReference>
<dbReference type="GO" id="GO:0000287">
    <property type="term" value="F:magnesium ion binding"/>
    <property type="evidence" value="ECO:0007669"/>
    <property type="project" value="UniProtKB-UniRule"/>
</dbReference>
<dbReference type="GO" id="GO:0003977">
    <property type="term" value="F:UDP-N-acetylglucosamine diphosphorylase activity"/>
    <property type="evidence" value="ECO:0007669"/>
    <property type="project" value="UniProtKB-UniRule"/>
</dbReference>
<dbReference type="GO" id="GO:0000902">
    <property type="term" value="P:cell morphogenesis"/>
    <property type="evidence" value="ECO:0007669"/>
    <property type="project" value="UniProtKB-UniRule"/>
</dbReference>
<dbReference type="GO" id="GO:0071555">
    <property type="term" value="P:cell wall organization"/>
    <property type="evidence" value="ECO:0007669"/>
    <property type="project" value="UniProtKB-KW"/>
</dbReference>
<dbReference type="GO" id="GO:0009245">
    <property type="term" value="P:lipid A biosynthetic process"/>
    <property type="evidence" value="ECO:0007669"/>
    <property type="project" value="UniProtKB-UniRule"/>
</dbReference>
<dbReference type="GO" id="GO:0009252">
    <property type="term" value="P:peptidoglycan biosynthetic process"/>
    <property type="evidence" value="ECO:0007669"/>
    <property type="project" value="UniProtKB-UniRule"/>
</dbReference>
<dbReference type="GO" id="GO:0008360">
    <property type="term" value="P:regulation of cell shape"/>
    <property type="evidence" value="ECO:0007669"/>
    <property type="project" value="UniProtKB-KW"/>
</dbReference>
<dbReference type="GO" id="GO:0006048">
    <property type="term" value="P:UDP-N-acetylglucosamine biosynthetic process"/>
    <property type="evidence" value="ECO:0007669"/>
    <property type="project" value="UniProtKB-UniPathway"/>
</dbReference>
<dbReference type="CDD" id="cd02540">
    <property type="entry name" value="GT2_GlmU_N_bac"/>
    <property type="match status" value="1"/>
</dbReference>
<dbReference type="CDD" id="cd03353">
    <property type="entry name" value="LbH_GlmU_C"/>
    <property type="match status" value="1"/>
</dbReference>
<dbReference type="Gene3D" id="2.160.10.10">
    <property type="entry name" value="Hexapeptide repeat proteins"/>
    <property type="match status" value="1"/>
</dbReference>
<dbReference type="Gene3D" id="3.90.550.10">
    <property type="entry name" value="Spore Coat Polysaccharide Biosynthesis Protein SpsA, Chain A"/>
    <property type="match status" value="1"/>
</dbReference>
<dbReference type="HAMAP" id="MF_01631">
    <property type="entry name" value="GlmU"/>
    <property type="match status" value="1"/>
</dbReference>
<dbReference type="InterPro" id="IPR005882">
    <property type="entry name" value="Bifunctional_GlmU"/>
</dbReference>
<dbReference type="InterPro" id="IPR050065">
    <property type="entry name" value="GlmU-like"/>
</dbReference>
<dbReference type="InterPro" id="IPR038009">
    <property type="entry name" value="GlmU_C_LbH"/>
</dbReference>
<dbReference type="InterPro" id="IPR001451">
    <property type="entry name" value="Hexapep"/>
</dbReference>
<dbReference type="InterPro" id="IPR018357">
    <property type="entry name" value="Hexapep_transf_CS"/>
</dbReference>
<dbReference type="InterPro" id="IPR005835">
    <property type="entry name" value="NTP_transferase_dom"/>
</dbReference>
<dbReference type="InterPro" id="IPR029044">
    <property type="entry name" value="Nucleotide-diphossugar_trans"/>
</dbReference>
<dbReference type="InterPro" id="IPR011004">
    <property type="entry name" value="Trimer_LpxA-like_sf"/>
</dbReference>
<dbReference type="NCBIfam" id="TIGR01173">
    <property type="entry name" value="glmU"/>
    <property type="match status" value="1"/>
</dbReference>
<dbReference type="NCBIfam" id="NF010934">
    <property type="entry name" value="PRK14354.1"/>
    <property type="match status" value="1"/>
</dbReference>
<dbReference type="PANTHER" id="PTHR43584:SF3">
    <property type="entry name" value="BIFUNCTIONAL PROTEIN GLMU"/>
    <property type="match status" value="1"/>
</dbReference>
<dbReference type="PANTHER" id="PTHR43584">
    <property type="entry name" value="NUCLEOTIDYL TRANSFERASE"/>
    <property type="match status" value="1"/>
</dbReference>
<dbReference type="Pfam" id="PF00132">
    <property type="entry name" value="Hexapep"/>
    <property type="match status" value="3"/>
</dbReference>
<dbReference type="Pfam" id="PF00483">
    <property type="entry name" value="NTP_transferase"/>
    <property type="match status" value="1"/>
</dbReference>
<dbReference type="SUPFAM" id="SSF53448">
    <property type="entry name" value="Nucleotide-diphospho-sugar transferases"/>
    <property type="match status" value="1"/>
</dbReference>
<dbReference type="SUPFAM" id="SSF51161">
    <property type="entry name" value="Trimeric LpxA-like enzymes"/>
    <property type="match status" value="1"/>
</dbReference>
<dbReference type="PROSITE" id="PS00101">
    <property type="entry name" value="HEXAPEP_TRANSFERASES"/>
    <property type="match status" value="1"/>
</dbReference>
<proteinExistence type="inferred from homology"/>
<protein>
    <recommendedName>
        <fullName evidence="1">Bifunctional protein GlmU</fullName>
    </recommendedName>
    <domain>
        <recommendedName>
            <fullName evidence="1">UDP-N-acetylglucosamine pyrophosphorylase</fullName>
            <ecNumber evidence="1">2.7.7.23</ecNumber>
        </recommendedName>
        <alternativeName>
            <fullName evidence="1">N-acetylglucosamine-1-phosphate uridyltransferase</fullName>
        </alternativeName>
    </domain>
    <domain>
        <recommendedName>
            <fullName evidence="1">Glucosamine-1-phosphate N-acetyltransferase</fullName>
            <ecNumber evidence="1">2.3.1.157</ecNumber>
        </recommendedName>
    </domain>
</protein>
<gene>
    <name evidence="1" type="primary">glmU</name>
    <name type="ordered locus">BLi00063</name>
    <name type="ordered locus">BL00520</name>
</gene>
<evidence type="ECO:0000255" key="1">
    <source>
        <dbReference type="HAMAP-Rule" id="MF_01631"/>
    </source>
</evidence>
<evidence type="ECO:0000305" key="2"/>
<sequence>MDKRFAVVLAAGQGTRMKSKLYKVLHPVCGKPMVEHVVDEARKLSLEKLVTIVGHGAEDVKKQLGEKSEYALQAEQLGTAHAVKQAKSILGSEKGTTIVICGDTPLLTAETMEAMLTEHQKKAAKVTILTAVAEDPTGYGRIIRNENGDVAKIVEHKDATEEERLVKEINTGTYCFDNEALFQTIEQVSNDNVQGEYYLPDVIEILKNQGETVAAYQTVNFQETLGVNDRVALSQAEIYMKQRINKRHMQNGVSLIDPDNTYISPEAVIGRDTVIYPGTVIKGRVVIGEDAVIGQNSELENSTVGSRTVIKQSVIVDSEVGDDVTIGPFAHIRPDSKIGNEVRIGNFVEVKKSEFGDRSKASHLSYIGDAEIGTDVNLGCGSITVNYDGKHKFKTKIENGAFIGCNSNLVAPVTIGEGAYVAAGSTITDDVPGRALSIARARQVNKEDYAENIHKK</sequence>
<name>GLMU_BACLD</name>
<organism>
    <name type="scientific">Bacillus licheniformis (strain ATCC 14580 / DSM 13 / JCM 2505 / CCUG 7422 / NBRC 12200 / NCIMB 9375 / NCTC 10341 / NRRL NRS-1264 / Gibson 46)</name>
    <dbReference type="NCBI Taxonomy" id="279010"/>
    <lineage>
        <taxon>Bacteria</taxon>
        <taxon>Bacillati</taxon>
        <taxon>Bacillota</taxon>
        <taxon>Bacilli</taxon>
        <taxon>Bacillales</taxon>
        <taxon>Bacillaceae</taxon>
        <taxon>Bacillus</taxon>
    </lineage>
</organism>
<feature type="chain" id="PRO_0000233732" description="Bifunctional protein GlmU">
    <location>
        <begin position="1"/>
        <end position="456"/>
    </location>
</feature>
<feature type="region of interest" description="Pyrophosphorylase" evidence="1">
    <location>
        <begin position="1"/>
        <end position="230"/>
    </location>
</feature>
<feature type="region of interest" description="Linker" evidence="1">
    <location>
        <begin position="231"/>
        <end position="251"/>
    </location>
</feature>
<feature type="region of interest" description="N-acetyltransferase" evidence="1">
    <location>
        <begin position="252"/>
        <end position="456"/>
    </location>
</feature>
<feature type="active site" description="Proton acceptor" evidence="1">
    <location>
        <position position="363"/>
    </location>
</feature>
<feature type="binding site" evidence="1">
    <location>
        <begin position="9"/>
        <end position="12"/>
    </location>
    <ligand>
        <name>UDP-N-acetyl-alpha-D-glucosamine</name>
        <dbReference type="ChEBI" id="CHEBI:57705"/>
    </ligand>
</feature>
<feature type="binding site" evidence="1">
    <location>
        <position position="23"/>
    </location>
    <ligand>
        <name>UDP-N-acetyl-alpha-D-glucosamine</name>
        <dbReference type="ChEBI" id="CHEBI:57705"/>
    </ligand>
</feature>
<feature type="binding site" evidence="1">
    <location>
        <position position="73"/>
    </location>
    <ligand>
        <name>UDP-N-acetyl-alpha-D-glucosamine</name>
        <dbReference type="ChEBI" id="CHEBI:57705"/>
    </ligand>
</feature>
<feature type="binding site" evidence="1">
    <location>
        <begin position="78"/>
        <end position="79"/>
    </location>
    <ligand>
        <name>UDP-N-acetyl-alpha-D-glucosamine</name>
        <dbReference type="ChEBI" id="CHEBI:57705"/>
    </ligand>
</feature>
<feature type="binding site" evidence="1">
    <location>
        <position position="103"/>
    </location>
    <ligand>
        <name>Mg(2+)</name>
        <dbReference type="ChEBI" id="CHEBI:18420"/>
    </ligand>
</feature>
<feature type="binding site" evidence="1">
    <location>
        <position position="140"/>
    </location>
    <ligand>
        <name>UDP-N-acetyl-alpha-D-glucosamine</name>
        <dbReference type="ChEBI" id="CHEBI:57705"/>
    </ligand>
</feature>
<feature type="binding site" evidence="1">
    <location>
        <position position="155"/>
    </location>
    <ligand>
        <name>UDP-N-acetyl-alpha-D-glucosamine</name>
        <dbReference type="ChEBI" id="CHEBI:57705"/>
    </ligand>
</feature>
<feature type="binding site" evidence="1">
    <location>
        <position position="170"/>
    </location>
    <ligand>
        <name>UDP-N-acetyl-alpha-D-glucosamine</name>
        <dbReference type="ChEBI" id="CHEBI:57705"/>
    </ligand>
</feature>
<feature type="binding site" evidence="1">
    <location>
        <position position="228"/>
    </location>
    <ligand>
        <name>Mg(2+)</name>
        <dbReference type="ChEBI" id="CHEBI:18420"/>
    </ligand>
</feature>
<feature type="binding site" evidence="1">
    <location>
        <position position="228"/>
    </location>
    <ligand>
        <name>UDP-N-acetyl-alpha-D-glucosamine</name>
        <dbReference type="ChEBI" id="CHEBI:57705"/>
    </ligand>
</feature>
<feature type="binding site" evidence="1">
    <location>
        <position position="333"/>
    </location>
    <ligand>
        <name>UDP-N-acetyl-alpha-D-glucosamine</name>
        <dbReference type="ChEBI" id="CHEBI:57705"/>
    </ligand>
</feature>
<feature type="binding site" evidence="1">
    <location>
        <position position="351"/>
    </location>
    <ligand>
        <name>UDP-N-acetyl-alpha-D-glucosamine</name>
        <dbReference type="ChEBI" id="CHEBI:57705"/>
    </ligand>
</feature>
<feature type="binding site" evidence="1">
    <location>
        <position position="366"/>
    </location>
    <ligand>
        <name>UDP-N-acetyl-alpha-D-glucosamine</name>
        <dbReference type="ChEBI" id="CHEBI:57705"/>
    </ligand>
</feature>
<feature type="binding site" evidence="1">
    <location>
        <position position="377"/>
    </location>
    <ligand>
        <name>UDP-N-acetyl-alpha-D-glucosamine</name>
        <dbReference type="ChEBI" id="CHEBI:57705"/>
    </ligand>
</feature>
<feature type="binding site" evidence="1">
    <location>
        <begin position="386"/>
        <end position="387"/>
    </location>
    <ligand>
        <name>acetyl-CoA</name>
        <dbReference type="ChEBI" id="CHEBI:57288"/>
    </ligand>
</feature>
<feature type="binding site" evidence="1">
    <location>
        <position position="423"/>
    </location>
    <ligand>
        <name>acetyl-CoA</name>
        <dbReference type="ChEBI" id="CHEBI:57288"/>
    </ligand>
</feature>
<feature type="binding site" evidence="1">
    <location>
        <position position="440"/>
    </location>
    <ligand>
        <name>acetyl-CoA</name>
        <dbReference type="ChEBI" id="CHEBI:57288"/>
    </ligand>
</feature>